<protein>
    <recommendedName>
        <fullName evidence="1">Homoserine O-succinyltransferase</fullName>
        <shortName evidence="1">HST</shortName>
        <ecNumber evidence="1">2.3.1.46</ecNumber>
    </recommendedName>
    <alternativeName>
        <fullName evidence="1">Homoserine transsuccinylase</fullName>
        <shortName evidence="1">HTS</shortName>
    </alternativeName>
</protein>
<gene>
    <name evidence="1" type="primary">metAS</name>
    <name type="ordered locus">SPAB_05175</name>
</gene>
<organism>
    <name type="scientific">Salmonella paratyphi B (strain ATCC BAA-1250 / SPB7)</name>
    <dbReference type="NCBI Taxonomy" id="1016998"/>
    <lineage>
        <taxon>Bacteria</taxon>
        <taxon>Pseudomonadati</taxon>
        <taxon>Pseudomonadota</taxon>
        <taxon>Gammaproteobacteria</taxon>
        <taxon>Enterobacterales</taxon>
        <taxon>Enterobacteriaceae</taxon>
        <taxon>Salmonella</taxon>
    </lineage>
</organism>
<name>METAS_SALPB</name>
<proteinExistence type="inferred from homology"/>
<reference key="1">
    <citation type="submission" date="2007-11" db="EMBL/GenBank/DDBJ databases">
        <authorList>
            <consortium name="The Salmonella enterica serovar Paratyphi B Genome Sequencing Project"/>
            <person name="McClelland M."/>
            <person name="Sanderson E.K."/>
            <person name="Porwollik S."/>
            <person name="Spieth J."/>
            <person name="Clifton W.S."/>
            <person name="Fulton R."/>
            <person name="Cordes M."/>
            <person name="Wollam A."/>
            <person name="Shah N."/>
            <person name="Pepin K."/>
            <person name="Bhonagiri V."/>
            <person name="Nash W."/>
            <person name="Johnson M."/>
            <person name="Thiruvilangam P."/>
            <person name="Wilson R."/>
        </authorList>
    </citation>
    <scope>NUCLEOTIDE SEQUENCE [LARGE SCALE GENOMIC DNA]</scope>
    <source>
        <strain>ATCC BAA-1250 / SPB7</strain>
    </source>
</reference>
<feature type="chain" id="PRO_1000078935" description="Homoserine O-succinyltransferase">
    <location>
        <begin position="1"/>
        <end position="309"/>
    </location>
</feature>
<feature type="active site" description="Acyl-thioester intermediate" evidence="1">
    <location>
        <position position="142"/>
    </location>
</feature>
<feature type="active site" description="Proton acceptor" evidence="1">
    <location>
        <position position="235"/>
    </location>
</feature>
<feature type="active site" evidence="1">
    <location>
        <position position="237"/>
    </location>
</feature>
<feature type="binding site" evidence="1">
    <location>
        <position position="163"/>
    </location>
    <ligand>
        <name>substrate</name>
    </ligand>
</feature>
<feature type="binding site" evidence="1">
    <location>
        <position position="192"/>
    </location>
    <ligand>
        <name>substrate</name>
    </ligand>
</feature>
<feature type="binding site" evidence="1">
    <location>
        <position position="249"/>
    </location>
    <ligand>
        <name>substrate</name>
    </ligand>
</feature>
<feature type="site" description="Important for acyl-CoA specificity" evidence="1">
    <location>
        <position position="111"/>
    </location>
</feature>
<feature type="site" description="Important for substrate specificity" evidence="1">
    <location>
        <position position="192"/>
    </location>
</feature>
<evidence type="ECO:0000255" key="1">
    <source>
        <dbReference type="HAMAP-Rule" id="MF_00295"/>
    </source>
</evidence>
<keyword id="KW-0012">Acyltransferase</keyword>
<keyword id="KW-0028">Amino-acid biosynthesis</keyword>
<keyword id="KW-0963">Cytoplasm</keyword>
<keyword id="KW-0486">Methionine biosynthesis</keyword>
<keyword id="KW-0808">Transferase</keyword>
<sequence>MPIRVLDELPAVNFLREENVFVMTTSRASGQEIRPLKVLILNLMPKKIETENQFLRLLSNSPLQVDIQLLRIDARESRNTPAEHLNNFYCNFDDICDQNFDGLIVTGAPLGLVEFNDVAYWPQIRQVLEWAKDHVTSTLFVCWAVQAALNILYGIPKQTRTDKLSGVYEHHILHPHALLTRGFDDSFLAPHSRYADFPAALIRDYTDLEILAETEEGDAYLFASKDKRIAFVTGHPEYDAHTLAGEYFRDVEAGLNPEVPYNYFPKNDPQNIPRATWRSHGNLLFTNWLNYYVYQITPYDLRHMNPTLD</sequence>
<accession>A9N0M3</accession>
<dbReference type="EC" id="2.3.1.46" evidence="1"/>
<dbReference type="EMBL" id="CP000886">
    <property type="protein sequence ID" value="ABX70452.1"/>
    <property type="molecule type" value="Genomic_DNA"/>
</dbReference>
<dbReference type="SMR" id="A9N0M3"/>
<dbReference type="KEGG" id="spq:SPAB_05175"/>
<dbReference type="PATRIC" id="fig|1016998.12.peg.4845"/>
<dbReference type="HOGENOM" id="CLU_057851_0_1_6"/>
<dbReference type="BioCyc" id="SENT1016998:SPAB_RS21070-MONOMER"/>
<dbReference type="UniPathway" id="UPA00051">
    <property type="reaction ID" value="UER00075"/>
</dbReference>
<dbReference type="Proteomes" id="UP000008556">
    <property type="component" value="Chromosome"/>
</dbReference>
<dbReference type="GO" id="GO:0005737">
    <property type="term" value="C:cytoplasm"/>
    <property type="evidence" value="ECO:0007669"/>
    <property type="project" value="UniProtKB-SubCell"/>
</dbReference>
<dbReference type="GO" id="GO:0004414">
    <property type="term" value="F:homoserine O-acetyltransferase activity"/>
    <property type="evidence" value="ECO:0007669"/>
    <property type="project" value="UniProtKB-UniRule"/>
</dbReference>
<dbReference type="GO" id="GO:0008899">
    <property type="term" value="F:homoserine O-succinyltransferase activity"/>
    <property type="evidence" value="ECO:0007669"/>
    <property type="project" value="UniProtKB-EC"/>
</dbReference>
<dbReference type="GO" id="GO:0019281">
    <property type="term" value="P:L-methionine biosynthetic process from homoserine via O-succinyl-L-homoserine and cystathionine"/>
    <property type="evidence" value="ECO:0007669"/>
    <property type="project" value="InterPro"/>
</dbReference>
<dbReference type="CDD" id="cd03131">
    <property type="entry name" value="GATase1_HTS"/>
    <property type="match status" value="1"/>
</dbReference>
<dbReference type="FunFam" id="3.40.50.880:FF:000004">
    <property type="entry name" value="Homoserine O-succinyltransferase"/>
    <property type="match status" value="1"/>
</dbReference>
<dbReference type="Gene3D" id="3.40.50.880">
    <property type="match status" value="1"/>
</dbReference>
<dbReference type="HAMAP" id="MF_00295">
    <property type="entry name" value="MetA_acyltransf"/>
    <property type="match status" value="1"/>
</dbReference>
<dbReference type="InterPro" id="IPR029062">
    <property type="entry name" value="Class_I_gatase-like"/>
</dbReference>
<dbReference type="InterPro" id="IPR005697">
    <property type="entry name" value="HST_MetA"/>
</dbReference>
<dbReference type="InterPro" id="IPR033752">
    <property type="entry name" value="MetA_family"/>
</dbReference>
<dbReference type="NCBIfam" id="TIGR01001">
    <property type="entry name" value="metA"/>
    <property type="match status" value="1"/>
</dbReference>
<dbReference type="PANTHER" id="PTHR20919">
    <property type="entry name" value="HOMOSERINE O-SUCCINYLTRANSFERASE"/>
    <property type="match status" value="1"/>
</dbReference>
<dbReference type="PANTHER" id="PTHR20919:SF0">
    <property type="entry name" value="HOMOSERINE O-SUCCINYLTRANSFERASE"/>
    <property type="match status" value="1"/>
</dbReference>
<dbReference type="Pfam" id="PF04204">
    <property type="entry name" value="HTS"/>
    <property type="match status" value="1"/>
</dbReference>
<dbReference type="PIRSF" id="PIRSF000450">
    <property type="entry name" value="H_ser_succinyltr"/>
    <property type="match status" value="1"/>
</dbReference>
<dbReference type="SUPFAM" id="SSF52317">
    <property type="entry name" value="Class I glutamine amidotransferase-like"/>
    <property type="match status" value="1"/>
</dbReference>
<comment type="function">
    <text evidence="1">Transfers a succinyl group from succinyl-CoA to L-homoserine, forming succinyl-L-homoserine.</text>
</comment>
<comment type="catalytic activity">
    <reaction evidence="1">
        <text>L-homoserine + succinyl-CoA = O-succinyl-L-homoserine + CoA</text>
        <dbReference type="Rhea" id="RHEA:22008"/>
        <dbReference type="ChEBI" id="CHEBI:57287"/>
        <dbReference type="ChEBI" id="CHEBI:57292"/>
        <dbReference type="ChEBI" id="CHEBI:57476"/>
        <dbReference type="ChEBI" id="CHEBI:57661"/>
        <dbReference type="EC" id="2.3.1.46"/>
    </reaction>
</comment>
<comment type="pathway">
    <text evidence="1">Amino-acid biosynthesis; L-methionine biosynthesis via de novo pathway; O-succinyl-L-homoserine from L-homoserine: step 1/1.</text>
</comment>
<comment type="subunit">
    <text evidence="1">Homodimer.</text>
</comment>
<comment type="subcellular location">
    <subcellularLocation>
        <location evidence="1">Cytoplasm</location>
    </subcellularLocation>
</comment>
<comment type="similarity">
    <text evidence="1">Belongs to the MetA family.</text>
</comment>